<comment type="function">
    <text evidence="1">Catalyzes the conversion of lactate to pyruvate.</text>
</comment>
<comment type="catalytic activity">
    <reaction evidence="1">
        <text>(S)-lactate + NAD(+) = pyruvate + NADH + H(+)</text>
        <dbReference type="Rhea" id="RHEA:23444"/>
        <dbReference type="ChEBI" id="CHEBI:15361"/>
        <dbReference type="ChEBI" id="CHEBI:15378"/>
        <dbReference type="ChEBI" id="CHEBI:16651"/>
        <dbReference type="ChEBI" id="CHEBI:57540"/>
        <dbReference type="ChEBI" id="CHEBI:57945"/>
        <dbReference type="EC" id="1.1.1.27"/>
    </reaction>
</comment>
<comment type="activity regulation">
    <text evidence="1">Allosterically activated by fructose 1,6-bisphosphate (FBP).</text>
</comment>
<comment type="pathway">
    <text evidence="1">Fermentation; pyruvate fermentation to lactate; (S)-lactate from pyruvate: step 1/1.</text>
</comment>
<comment type="subunit">
    <text evidence="1">Homotetramer.</text>
</comment>
<comment type="subcellular location">
    <subcellularLocation>
        <location evidence="1">Cytoplasm</location>
    </subcellularLocation>
</comment>
<comment type="similarity">
    <text evidence="1 2">Belongs to the LDH/MDH superfamily. LDH family.</text>
</comment>
<dbReference type="EC" id="1.1.1.27" evidence="1"/>
<dbReference type="EMBL" id="AE000783">
    <property type="protein sequence ID" value="AAC66470.1"/>
    <property type="molecule type" value="Genomic_DNA"/>
</dbReference>
<dbReference type="PIR" id="G70110">
    <property type="entry name" value="G70110"/>
</dbReference>
<dbReference type="RefSeq" id="NP_212221.1">
    <property type="nucleotide sequence ID" value="NC_001318.1"/>
</dbReference>
<dbReference type="RefSeq" id="WP_010889680.1">
    <property type="nucleotide sequence ID" value="NC_001318.1"/>
</dbReference>
<dbReference type="PDB" id="9DQ7">
    <property type="method" value="X-ray"/>
    <property type="resolution" value="2.11 A"/>
    <property type="chains" value="A/B/C/P=1-314"/>
</dbReference>
<dbReference type="PDB" id="9DQ9">
    <property type="method" value="X-ray"/>
    <property type="resolution" value="2.10 A"/>
    <property type="chains" value="A/B/C/P=1-314"/>
</dbReference>
<dbReference type="PDBsum" id="9DQ7"/>
<dbReference type="PDBsum" id="9DQ9"/>
<dbReference type="SMR" id="O51114"/>
<dbReference type="STRING" id="224326.BB_0087"/>
<dbReference type="PaxDb" id="224326-BB_0087"/>
<dbReference type="EnsemblBacteria" id="AAC66470">
    <property type="protein sequence ID" value="AAC66470"/>
    <property type="gene ID" value="BB_0087"/>
</dbReference>
<dbReference type="KEGG" id="bbu:BB_0087"/>
<dbReference type="PATRIC" id="fig|224326.49.peg.485"/>
<dbReference type="HOGENOM" id="CLU_045401_1_1_12"/>
<dbReference type="OrthoDB" id="9802969at2"/>
<dbReference type="UniPathway" id="UPA00554">
    <property type="reaction ID" value="UER00611"/>
</dbReference>
<dbReference type="Proteomes" id="UP000001807">
    <property type="component" value="Chromosome"/>
</dbReference>
<dbReference type="GO" id="GO:0005829">
    <property type="term" value="C:cytosol"/>
    <property type="evidence" value="ECO:0000314"/>
    <property type="project" value="CAFA"/>
</dbReference>
<dbReference type="GO" id="GO:0004459">
    <property type="term" value="F:L-lactate dehydrogenase activity"/>
    <property type="evidence" value="ECO:0007669"/>
    <property type="project" value="UniProtKB-UniRule"/>
</dbReference>
<dbReference type="GO" id="GO:0006096">
    <property type="term" value="P:glycolytic process"/>
    <property type="evidence" value="ECO:0007669"/>
    <property type="project" value="UniProtKB-UniRule"/>
</dbReference>
<dbReference type="GO" id="GO:0006089">
    <property type="term" value="P:lactate metabolic process"/>
    <property type="evidence" value="ECO:0007669"/>
    <property type="project" value="TreeGrafter"/>
</dbReference>
<dbReference type="CDD" id="cd05291">
    <property type="entry name" value="HicDH_like"/>
    <property type="match status" value="1"/>
</dbReference>
<dbReference type="FunFam" id="3.90.110.10:FF:000019">
    <property type="entry name" value="L-lactate dehydrogenase"/>
    <property type="match status" value="1"/>
</dbReference>
<dbReference type="FunFam" id="3.40.50.720:FF:000018">
    <property type="entry name" value="Malate dehydrogenase"/>
    <property type="match status" value="1"/>
</dbReference>
<dbReference type="Gene3D" id="3.90.110.10">
    <property type="entry name" value="Lactate dehydrogenase/glycoside hydrolase, family 4, C-terminal"/>
    <property type="match status" value="1"/>
</dbReference>
<dbReference type="Gene3D" id="3.40.50.720">
    <property type="entry name" value="NAD(P)-binding Rossmann-like Domain"/>
    <property type="match status" value="1"/>
</dbReference>
<dbReference type="HAMAP" id="MF_00488">
    <property type="entry name" value="Lactate_dehydrog"/>
    <property type="match status" value="1"/>
</dbReference>
<dbReference type="InterPro" id="IPR001557">
    <property type="entry name" value="L-lactate/malate_DH"/>
</dbReference>
<dbReference type="InterPro" id="IPR011304">
    <property type="entry name" value="L-lactate_DH"/>
</dbReference>
<dbReference type="InterPro" id="IPR018177">
    <property type="entry name" value="L-lactate_DH_AS"/>
</dbReference>
<dbReference type="InterPro" id="IPR022383">
    <property type="entry name" value="Lactate/malate_DH_C"/>
</dbReference>
<dbReference type="InterPro" id="IPR001236">
    <property type="entry name" value="Lactate/malate_DH_N"/>
</dbReference>
<dbReference type="InterPro" id="IPR015955">
    <property type="entry name" value="Lactate_DH/Glyco_Ohase_4_C"/>
</dbReference>
<dbReference type="InterPro" id="IPR036291">
    <property type="entry name" value="NAD(P)-bd_dom_sf"/>
</dbReference>
<dbReference type="NCBIfam" id="TIGR01771">
    <property type="entry name" value="L-LDH-NAD"/>
    <property type="match status" value="1"/>
</dbReference>
<dbReference type="NCBIfam" id="NF000824">
    <property type="entry name" value="PRK00066.1"/>
    <property type="match status" value="1"/>
</dbReference>
<dbReference type="PANTHER" id="PTHR43128">
    <property type="entry name" value="L-2-HYDROXYCARBOXYLATE DEHYDROGENASE (NAD(P)(+))"/>
    <property type="match status" value="1"/>
</dbReference>
<dbReference type="PANTHER" id="PTHR43128:SF16">
    <property type="entry name" value="L-LACTATE DEHYDROGENASE"/>
    <property type="match status" value="1"/>
</dbReference>
<dbReference type="Pfam" id="PF02866">
    <property type="entry name" value="Ldh_1_C"/>
    <property type="match status" value="1"/>
</dbReference>
<dbReference type="Pfam" id="PF00056">
    <property type="entry name" value="Ldh_1_N"/>
    <property type="match status" value="1"/>
</dbReference>
<dbReference type="PIRSF" id="PIRSF000102">
    <property type="entry name" value="Lac_mal_DH"/>
    <property type="match status" value="1"/>
</dbReference>
<dbReference type="PRINTS" id="PR00086">
    <property type="entry name" value="LLDHDRGNASE"/>
</dbReference>
<dbReference type="SUPFAM" id="SSF56327">
    <property type="entry name" value="LDH C-terminal domain-like"/>
    <property type="match status" value="1"/>
</dbReference>
<dbReference type="SUPFAM" id="SSF51735">
    <property type="entry name" value="NAD(P)-binding Rossmann-fold domains"/>
    <property type="match status" value="1"/>
</dbReference>
<dbReference type="PROSITE" id="PS00064">
    <property type="entry name" value="L_LDH"/>
    <property type="match status" value="1"/>
</dbReference>
<name>LDH_BORBU</name>
<organism>
    <name type="scientific">Borreliella burgdorferi (strain ATCC 35210 / DSM 4680 / CIP 102532 / B31)</name>
    <name type="common">Borrelia burgdorferi</name>
    <dbReference type="NCBI Taxonomy" id="224326"/>
    <lineage>
        <taxon>Bacteria</taxon>
        <taxon>Pseudomonadati</taxon>
        <taxon>Spirochaetota</taxon>
        <taxon>Spirochaetia</taxon>
        <taxon>Spirochaetales</taxon>
        <taxon>Borreliaceae</taxon>
        <taxon>Borreliella</taxon>
    </lineage>
</organism>
<keyword id="KW-0002">3D-structure</keyword>
<keyword id="KW-0021">Allosteric enzyme</keyword>
<keyword id="KW-0963">Cytoplasm</keyword>
<keyword id="KW-0520">NAD</keyword>
<keyword id="KW-0560">Oxidoreductase</keyword>
<keyword id="KW-0597">Phosphoprotein</keyword>
<keyword id="KW-1185">Reference proteome</keyword>
<sequence length="316" mass="34845">MLKSNKVVLIGAGGVGSSFAYALTIDNSLVHELVIIDVNENKAKGEVMDLNHGQMFLKKNINVLFGTYKDCANADIVVITAGLNQKPGETRLDLVDKNSKIFKDIITNVVSSGFDGIFVVASNPVDIMTYVTMKYSKFPIHKVIGTGTILDTSRLRYFLSDHFNVNTQNIHSYIMGEHGDSSFATWDETKIAMKPLSEYLAEGKITELELDEIHKKVVNAAYEVIKLKGATYYAIGLGIKNIVNAIIGDQNVILPISSYINGQYGGLIKDIYIGAPAIVCKEGVKEVLNFKISPKELDKFNSSANQLKSYIDKMEF</sequence>
<accession>O51114</accession>
<protein>
    <recommendedName>
        <fullName evidence="1">L-lactate dehydrogenase</fullName>
        <shortName evidence="1">L-LDH</shortName>
        <ecNumber evidence="1">1.1.1.27</ecNumber>
    </recommendedName>
</protein>
<gene>
    <name evidence="1" type="primary">ldh</name>
    <name type="ordered locus">BB_0087</name>
</gene>
<feature type="chain" id="PRO_0000168332" description="L-lactate dehydrogenase">
    <location>
        <begin position="1"/>
        <end position="316"/>
    </location>
</feature>
<feature type="active site" description="Proton acceptor" evidence="1">
    <location>
        <position position="178"/>
    </location>
</feature>
<feature type="binding site" evidence="1">
    <location>
        <position position="15"/>
    </location>
    <ligand>
        <name>NAD(+)</name>
        <dbReference type="ChEBI" id="CHEBI:57540"/>
    </ligand>
</feature>
<feature type="binding site" evidence="1">
    <location>
        <position position="37"/>
    </location>
    <ligand>
        <name>NAD(+)</name>
        <dbReference type="ChEBI" id="CHEBI:57540"/>
    </ligand>
</feature>
<feature type="binding site" evidence="1">
    <location>
        <position position="42"/>
    </location>
    <ligand>
        <name>NAD(+)</name>
        <dbReference type="ChEBI" id="CHEBI:57540"/>
    </ligand>
</feature>
<feature type="binding site" evidence="1">
    <location>
        <position position="68"/>
    </location>
    <ligand>
        <name>NAD(+)</name>
        <dbReference type="ChEBI" id="CHEBI:57540"/>
    </ligand>
</feature>
<feature type="binding site" evidence="1">
    <location>
        <begin position="82"/>
        <end position="83"/>
    </location>
    <ligand>
        <name>NAD(+)</name>
        <dbReference type="ChEBI" id="CHEBI:57540"/>
    </ligand>
</feature>
<feature type="binding site" evidence="1">
    <location>
        <position position="85"/>
    </location>
    <ligand>
        <name>substrate</name>
    </ligand>
</feature>
<feature type="binding site" evidence="1">
    <location>
        <position position="91"/>
    </location>
    <ligand>
        <name>substrate</name>
    </ligand>
</feature>
<feature type="binding site" evidence="1">
    <location>
        <begin position="121"/>
        <end position="123"/>
    </location>
    <ligand>
        <name>NAD(+)</name>
        <dbReference type="ChEBI" id="CHEBI:57540"/>
    </ligand>
</feature>
<feature type="binding site" evidence="1">
    <location>
        <begin position="123"/>
        <end position="126"/>
    </location>
    <ligand>
        <name>substrate</name>
    </ligand>
</feature>
<feature type="binding site" evidence="1">
    <location>
        <position position="146"/>
    </location>
    <ligand>
        <name>NAD(+)</name>
        <dbReference type="ChEBI" id="CHEBI:57540"/>
    </ligand>
</feature>
<feature type="binding site" evidence="1">
    <location>
        <begin position="151"/>
        <end position="154"/>
    </location>
    <ligand>
        <name>substrate</name>
    </ligand>
</feature>
<feature type="binding site" evidence="1">
    <location>
        <position position="156"/>
    </location>
    <ligand>
        <name>beta-D-fructose 1,6-bisphosphate</name>
        <dbReference type="ChEBI" id="CHEBI:32966"/>
        <note>allosteric activator</note>
    </ligand>
</feature>
<feature type="binding site" evidence="1">
    <location>
        <position position="171"/>
    </location>
    <ligand>
        <name>beta-D-fructose 1,6-bisphosphate</name>
        <dbReference type="ChEBI" id="CHEBI:32966"/>
        <note>allosteric activator</note>
    </ligand>
</feature>
<feature type="binding site" evidence="1">
    <location>
        <position position="231"/>
    </location>
    <ligand>
        <name>substrate</name>
    </ligand>
</feature>
<feature type="modified residue" description="Phosphotyrosine" evidence="1">
    <location>
        <position position="222"/>
    </location>
</feature>
<evidence type="ECO:0000255" key="1">
    <source>
        <dbReference type="HAMAP-Rule" id="MF_00488"/>
    </source>
</evidence>
<evidence type="ECO:0000305" key="2"/>
<proteinExistence type="evidence at protein level"/>
<reference key="1">
    <citation type="journal article" date="1997" name="Nature">
        <title>Genomic sequence of a Lyme disease spirochaete, Borrelia burgdorferi.</title>
        <authorList>
            <person name="Fraser C.M."/>
            <person name="Casjens S."/>
            <person name="Huang W.M."/>
            <person name="Sutton G.G."/>
            <person name="Clayton R.A."/>
            <person name="Lathigra R."/>
            <person name="White O."/>
            <person name="Ketchum K.A."/>
            <person name="Dodson R.J."/>
            <person name="Hickey E.K."/>
            <person name="Gwinn M.L."/>
            <person name="Dougherty B.A."/>
            <person name="Tomb J.-F."/>
            <person name="Fleischmann R.D."/>
            <person name="Richardson D.L."/>
            <person name="Peterson J.D."/>
            <person name="Kerlavage A.R."/>
            <person name="Quackenbush J."/>
            <person name="Salzberg S.L."/>
            <person name="Hanson M."/>
            <person name="van Vugt R."/>
            <person name="Palmer N."/>
            <person name="Adams M.D."/>
            <person name="Gocayne J.D."/>
            <person name="Weidman J.F."/>
            <person name="Utterback T.R."/>
            <person name="Watthey L."/>
            <person name="McDonald L.A."/>
            <person name="Artiach P."/>
            <person name="Bowman C."/>
            <person name="Garland S.A."/>
            <person name="Fujii C."/>
            <person name="Cotton M.D."/>
            <person name="Horst K."/>
            <person name="Roberts K.M."/>
            <person name="Hatch B."/>
            <person name="Smith H.O."/>
            <person name="Venter J.C."/>
        </authorList>
    </citation>
    <scope>NUCLEOTIDE SEQUENCE [LARGE SCALE GENOMIC DNA]</scope>
    <source>
        <strain>ATCC 35210 / DSM 4680 / CIP 102532 / B31</strain>
    </source>
</reference>